<evidence type="ECO:0000255" key="1">
    <source>
        <dbReference type="HAMAP-Rule" id="MF_01865"/>
    </source>
</evidence>
<evidence type="ECO:0000255" key="2">
    <source>
        <dbReference type="PROSITE-ProRule" id="PRU01266"/>
    </source>
</evidence>
<reference key="1">
    <citation type="journal article" date="2004" name="J. Bacteriol.">
        <title>Comparative genomics of two Leptospira interrogans serovars reveals novel insights into physiology and pathogenesis.</title>
        <authorList>
            <person name="Nascimento A.L.T.O."/>
            <person name="Ko A.I."/>
            <person name="Martins E.A.L."/>
            <person name="Monteiro-Vitorello C.B."/>
            <person name="Ho P.L."/>
            <person name="Haake D.A."/>
            <person name="Verjovski-Almeida S."/>
            <person name="Hartskeerl R.A."/>
            <person name="Marques M.V."/>
            <person name="Oliveira M.C."/>
            <person name="Menck C.F.M."/>
            <person name="Leite L.C.C."/>
            <person name="Carrer H."/>
            <person name="Coutinho L.L."/>
            <person name="Degrave W.M."/>
            <person name="Dellagostin O.A."/>
            <person name="El-Dorry H."/>
            <person name="Ferro E.S."/>
            <person name="Ferro M.I.T."/>
            <person name="Furlan L.R."/>
            <person name="Gamberini M."/>
            <person name="Giglioti E.A."/>
            <person name="Goes-Neto A."/>
            <person name="Goldman G.H."/>
            <person name="Goldman M.H.S."/>
            <person name="Harakava R."/>
            <person name="Jeronimo S.M.B."/>
            <person name="Junqueira-de-Azevedo I.L.M."/>
            <person name="Kimura E.T."/>
            <person name="Kuramae E.E."/>
            <person name="Lemos E.G.M."/>
            <person name="Lemos M.V.F."/>
            <person name="Marino C.L."/>
            <person name="Nunes L.R."/>
            <person name="de Oliveira R.C."/>
            <person name="Pereira G.G."/>
            <person name="Reis M.S."/>
            <person name="Schriefer A."/>
            <person name="Siqueira W.J."/>
            <person name="Sommer P."/>
            <person name="Tsai S.M."/>
            <person name="Simpson A.J.G."/>
            <person name="Ferro J.A."/>
            <person name="Camargo L.E.A."/>
            <person name="Kitajima J.P."/>
            <person name="Setubal J.C."/>
            <person name="Van Sluys M.A."/>
        </authorList>
    </citation>
    <scope>NUCLEOTIDE SEQUENCE [LARGE SCALE GENOMIC DNA]</scope>
    <source>
        <strain>Fiocruz L1-130</strain>
    </source>
</reference>
<organism>
    <name type="scientific">Leptospira interrogans serogroup Icterohaemorrhagiae serovar copenhageni (strain Fiocruz L1-130)</name>
    <dbReference type="NCBI Taxonomy" id="267671"/>
    <lineage>
        <taxon>Bacteria</taxon>
        <taxon>Pseudomonadati</taxon>
        <taxon>Spirochaetota</taxon>
        <taxon>Spirochaetia</taxon>
        <taxon>Leptospirales</taxon>
        <taxon>Leptospiraceae</taxon>
        <taxon>Leptospira</taxon>
    </lineage>
</organism>
<feature type="chain" id="PRO_0000374882" description="Ribosomal protein uS12 methylthiotransferase RimO">
    <location>
        <begin position="1"/>
        <end position="437"/>
    </location>
</feature>
<feature type="domain" description="MTTase N-terminal" evidence="1">
    <location>
        <begin position="3"/>
        <end position="118"/>
    </location>
</feature>
<feature type="domain" description="Radical SAM core" evidence="2">
    <location>
        <begin position="143"/>
        <end position="370"/>
    </location>
</feature>
<feature type="domain" description="TRAM" evidence="1">
    <location>
        <begin position="373"/>
        <end position="437"/>
    </location>
</feature>
<feature type="binding site" evidence="1">
    <location>
        <position position="12"/>
    </location>
    <ligand>
        <name>[4Fe-4S] cluster</name>
        <dbReference type="ChEBI" id="CHEBI:49883"/>
        <label>1</label>
    </ligand>
</feature>
<feature type="binding site" evidence="1">
    <location>
        <position position="48"/>
    </location>
    <ligand>
        <name>[4Fe-4S] cluster</name>
        <dbReference type="ChEBI" id="CHEBI:49883"/>
        <label>1</label>
    </ligand>
</feature>
<feature type="binding site" evidence="1">
    <location>
        <position position="81"/>
    </location>
    <ligand>
        <name>[4Fe-4S] cluster</name>
        <dbReference type="ChEBI" id="CHEBI:49883"/>
        <label>1</label>
    </ligand>
</feature>
<feature type="binding site" evidence="1">
    <location>
        <position position="157"/>
    </location>
    <ligand>
        <name>[4Fe-4S] cluster</name>
        <dbReference type="ChEBI" id="CHEBI:49883"/>
        <label>2</label>
        <note>4Fe-4S-S-AdoMet</note>
    </ligand>
</feature>
<feature type="binding site" evidence="1">
    <location>
        <position position="161"/>
    </location>
    <ligand>
        <name>[4Fe-4S] cluster</name>
        <dbReference type="ChEBI" id="CHEBI:49883"/>
        <label>2</label>
        <note>4Fe-4S-S-AdoMet</note>
    </ligand>
</feature>
<feature type="binding site" evidence="1">
    <location>
        <position position="164"/>
    </location>
    <ligand>
        <name>[4Fe-4S] cluster</name>
        <dbReference type="ChEBI" id="CHEBI:49883"/>
        <label>2</label>
        <note>4Fe-4S-S-AdoMet</note>
    </ligand>
</feature>
<dbReference type="EC" id="2.8.4.4" evidence="1"/>
<dbReference type="EMBL" id="AE016823">
    <property type="protein sequence ID" value="AAS71108.1"/>
    <property type="molecule type" value="Genomic_DNA"/>
</dbReference>
<dbReference type="RefSeq" id="WP_000358325.1">
    <property type="nucleotide sequence ID" value="NC_005823.1"/>
</dbReference>
<dbReference type="SMR" id="Q72PC8"/>
<dbReference type="GeneID" id="61142420"/>
<dbReference type="KEGG" id="lic:LIC_12543"/>
<dbReference type="HOGENOM" id="CLU_018697_0_1_12"/>
<dbReference type="Proteomes" id="UP000007037">
    <property type="component" value="Chromosome I"/>
</dbReference>
<dbReference type="GO" id="GO:0005829">
    <property type="term" value="C:cytosol"/>
    <property type="evidence" value="ECO:0007669"/>
    <property type="project" value="TreeGrafter"/>
</dbReference>
<dbReference type="GO" id="GO:0051539">
    <property type="term" value="F:4 iron, 4 sulfur cluster binding"/>
    <property type="evidence" value="ECO:0007669"/>
    <property type="project" value="UniProtKB-UniRule"/>
</dbReference>
<dbReference type="GO" id="GO:0035599">
    <property type="term" value="F:aspartic acid methylthiotransferase activity"/>
    <property type="evidence" value="ECO:0007669"/>
    <property type="project" value="TreeGrafter"/>
</dbReference>
<dbReference type="GO" id="GO:0046872">
    <property type="term" value="F:metal ion binding"/>
    <property type="evidence" value="ECO:0007669"/>
    <property type="project" value="UniProtKB-KW"/>
</dbReference>
<dbReference type="GO" id="GO:0103039">
    <property type="term" value="F:protein methylthiotransferase activity"/>
    <property type="evidence" value="ECO:0007669"/>
    <property type="project" value="UniProtKB-EC"/>
</dbReference>
<dbReference type="GO" id="GO:0006400">
    <property type="term" value="P:tRNA modification"/>
    <property type="evidence" value="ECO:0007669"/>
    <property type="project" value="InterPro"/>
</dbReference>
<dbReference type="CDD" id="cd01335">
    <property type="entry name" value="Radical_SAM"/>
    <property type="match status" value="1"/>
</dbReference>
<dbReference type="FunFam" id="3.40.50.12160:FF:000010">
    <property type="entry name" value="Ribosomal protein S12 methylthiotransferase RimO"/>
    <property type="match status" value="1"/>
</dbReference>
<dbReference type="FunFam" id="3.80.30.20:FF:000001">
    <property type="entry name" value="tRNA-2-methylthio-N(6)-dimethylallyladenosine synthase 2"/>
    <property type="match status" value="1"/>
</dbReference>
<dbReference type="Gene3D" id="3.40.50.12160">
    <property type="entry name" value="Methylthiotransferase, N-terminal domain"/>
    <property type="match status" value="1"/>
</dbReference>
<dbReference type="Gene3D" id="2.40.50.140">
    <property type="entry name" value="Nucleic acid-binding proteins"/>
    <property type="match status" value="1"/>
</dbReference>
<dbReference type="Gene3D" id="3.80.30.20">
    <property type="entry name" value="tm_1862 like domain"/>
    <property type="match status" value="1"/>
</dbReference>
<dbReference type="HAMAP" id="MF_01865">
    <property type="entry name" value="MTTase_RimO"/>
    <property type="match status" value="1"/>
</dbReference>
<dbReference type="InterPro" id="IPR006638">
    <property type="entry name" value="Elp3/MiaA/NifB-like_rSAM"/>
</dbReference>
<dbReference type="InterPro" id="IPR005839">
    <property type="entry name" value="Methylthiotransferase"/>
</dbReference>
<dbReference type="InterPro" id="IPR020612">
    <property type="entry name" value="Methylthiotransferase_CS"/>
</dbReference>
<dbReference type="InterPro" id="IPR013848">
    <property type="entry name" value="Methylthiotransferase_N"/>
</dbReference>
<dbReference type="InterPro" id="IPR038135">
    <property type="entry name" value="Methylthiotransferase_N_sf"/>
</dbReference>
<dbReference type="InterPro" id="IPR012340">
    <property type="entry name" value="NA-bd_OB-fold"/>
</dbReference>
<dbReference type="InterPro" id="IPR005840">
    <property type="entry name" value="Ribosomal_uS12_MeSTrfase_RimO"/>
</dbReference>
<dbReference type="InterPro" id="IPR007197">
    <property type="entry name" value="rSAM"/>
</dbReference>
<dbReference type="InterPro" id="IPR023404">
    <property type="entry name" value="rSAM_horseshoe"/>
</dbReference>
<dbReference type="InterPro" id="IPR002792">
    <property type="entry name" value="TRAM_dom"/>
</dbReference>
<dbReference type="NCBIfam" id="TIGR01125">
    <property type="entry name" value="30S ribosomal protein S12 methylthiotransferase RimO"/>
    <property type="match status" value="1"/>
</dbReference>
<dbReference type="NCBIfam" id="TIGR00089">
    <property type="entry name" value="MiaB/RimO family radical SAM methylthiotransferase"/>
    <property type="match status" value="1"/>
</dbReference>
<dbReference type="PANTHER" id="PTHR43837">
    <property type="entry name" value="RIBOSOMAL PROTEIN S12 METHYLTHIOTRANSFERASE RIMO"/>
    <property type="match status" value="1"/>
</dbReference>
<dbReference type="PANTHER" id="PTHR43837:SF1">
    <property type="entry name" value="RIBOSOMAL PROTEIN US12 METHYLTHIOTRANSFERASE RIMO"/>
    <property type="match status" value="1"/>
</dbReference>
<dbReference type="Pfam" id="PF04055">
    <property type="entry name" value="Radical_SAM"/>
    <property type="match status" value="1"/>
</dbReference>
<dbReference type="Pfam" id="PF18693">
    <property type="entry name" value="TRAM_2"/>
    <property type="match status" value="1"/>
</dbReference>
<dbReference type="Pfam" id="PF00919">
    <property type="entry name" value="UPF0004"/>
    <property type="match status" value="1"/>
</dbReference>
<dbReference type="SFLD" id="SFLDG01082">
    <property type="entry name" value="B12-binding_domain_containing"/>
    <property type="match status" value="1"/>
</dbReference>
<dbReference type="SFLD" id="SFLDG01061">
    <property type="entry name" value="methylthiotransferase"/>
    <property type="match status" value="1"/>
</dbReference>
<dbReference type="SFLD" id="SFLDS00029">
    <property type="entry name" value="Radical_SAM"/>
    <property type="match status" value="1"/>
</dbReference>
<dbReference type="SMART" id="SM00729">
    <property type="entry name" value="Elp3"/>
    <property type="match status" value="1"/>
</dbReference>
<dbReference type="SUPFAM" id="SSF102114">
    <property type="entry name" value="Radical SAM enzymes"/>
    <property type="match status" value="1"/>
</dbReference>
<dbReference type="PROSITE" id="PS51449">
    <property type="entry name" value="MTTASE_N"/>
    <property type="match status" value="1"/>
</dbReference>
<dbReference type="PROSITE" id="PS01278">
    <property type="entry name" value="MTTASE_RADICAL"/>
    <property type="match status" value="1"/>
</dbReference>
<dbReference type="PROSITE" id="PS51918">
    <property type="entry name" value="RADICAL_SAM"/>
    <property type="match status" value="1"/>
</dbReference>
<gene>
    <name evidence="1" type="primary">rimO</name>
    <name type="ordered locus">LIC_12543</name>
</gene>
<accession>Q72PC8</accession>
<name>RIMO_LEPIC</name>
<keyword id="KW-0004">4Fe-4S</keyword>
<keyword id="KW-0963">Cytoplasm</keyword>
<keyword id="KW-0408">Iron</keyword>
<keyword id="KW-0411">Iron-sulfur</keyword>
<keyword id="KW-0479">Metal-binding</keyword>
<keyword id="KW-0949">S-adenosyl-L-methionine</keyword>
<keyword id="KW-0808">Transferase</keyword>
<comment type="function">
    <text evidence="1">Catalyzes the methylthiolation of an aspartic acid residue of ribosomal protein uS12.</text>
</comment>
<comment type="catalytic activity">
    <reaction evidence="1">
        <text>L-aspartate(89)-[ribosomal protein uS12]-hydrogen + (sulfur carrier)-SH + AH2 + 2 S-adenosyl-L-methionine = 3-methylsulfanyl-L-aspartate(89)-[ribosomal protein uS12]-hydrogen + (sulfur carrier)-H + 5'-deoxyadenosine + L-methionine + A + S-adenosyl-L-homocysteine + 2 H(+)</text>
        <dbReference type="Rhea" id="RHEA:37087"/>
        <dbReference type="Rhea" id="RHEA-COMP:10460"/>
        <dbReference type="Rhea" id="RHEA-COMP:10461"/>
        <dbReference type="Rhea" id="RHEA-COMP:14737"/>
        <dbReference type="Rhea" id="RHEA-COMP:14739"/>
        <dbReference type="ChEBI" id="CHEBI:13193"/>
        <dbReference type="ChEBI" id="CHEBI:15378"/>
        <dbReference type="ChEBI" id="CHEBI:17319"/>
        <dbReference type="ChEBI" id="CHEBI:17499"/>
        <dbReference type="ChEBI" id="CHEBI:29917"/>
        <dbReference type="ChEBI" id="CHEBI:29961"/>
        <dbReference type="ChEBI" id="CHEBI:57844"/>
        <dbReference type="ChEBI" id="CHEBI:57856"/>
        <dbReference type="ChEBI" id="CHEBI:59789"/>
        <dbReference type="ChEBI" id="CHEBI:64428"/>
        <dbReference type="ChEBI" id="CHEBI:73599"/>
        <dbReference type="EC" id="2.8.4.4"/>
    </reaction>
</comment>
<comment type="cofactor">
    <cofactor evidence="1">
        <name>[4Fe-4S] cluster</name>
        <dbReference type="ChEBI" id="CHEBI:49883"/>
    </cofactor>
    <text evidence="1">Binds 2 [4Fe-4S] clusters. One cluster is coordinated with 3 cysteines and an exchangeable S-adenosyl-L-methionine.</text>
</comment>
<comment type="subcellular location">
    <subcellularLocation>
        <location evidence="1">Cytoplasm</location>
    </subcellularLocation>
</comment>
<comment type="similarity">
    <text evidence="1">Belongs to the methylthiotransferase family. RimO subfamily.</text>
</comment>
<protein>
    <recommendedName>
        <fullName evidence="1">Ribosomal protein uS12 methylthiotransferase RimO</fullName>
        <shortName evidence="1">uS12 MTTase</shortName>
        <shortName evidence="1">uS12 methylthiotransferase</shortName>
        <ecNumber evidence="1">2.8.4.4</ecNumber>
    </recommendedName>
    <alternativeName>
        <fullName evidence="1">Ribosomal protein uS12 (aspartate-C(3))-methylthiotransferase</fullName>
    </alternativeName>
    <alternativeName>
        <fullName evidence="1">Ribosome maturation factor RimO</fullName>
    </alternativeName>
</protein>
<proteinExistence type="inferred from homology"/>
<sequence length="437" mass="49885">MDKKFYITTLGCPKNIADSMSMHHSLLEEGFTPASLPEESDFHFINTCTFIQSATEETIQTILSAAQVKKQNHQKLVVVGCFAERYPDNIHSEIPEVDLFFGTGKYSQAGKILREKFPELSPSQLEFNDSLLERWKLSSKIENYSKPYAYVKVSDGCNRGCSFCIIPSFRGKFAESPLDDILRDTNRAIRAGAKEICLVSQDTVYYGRDSEILLDMVRKVAEIDSLEILRLLYLYPDKKTEKLIRLMGETSKIAPYLESPLQHVSSKILKVMNRTGESSYFKDLFSLAREVKPGLEIRTSFIIGYPGEEPEDVDQILRFIEDTRPEKVNLFSYSPQEGTKGAQLKQTVSEKEKSKRINLIRDSHLEILEEIHESRIGRTYDAIVDGIEDGQAVVRRFQDAPEMDEVVYVDDVSLLPGRIGKVRIDSFYEYDMNGTWV</sequence>